<organism>
    <name type="scientific">Penicillium roqueforti</name>
    <dbReference type="NCBI Taxonomy" id="5082"/>
    <lineage>
        <taxon>Eukaryota</taxon>
        <taxon>Fungi</taxon>
        <taxon>Dikarya</taxon>
        <taxon>Ascomycota</taxon>
        <taxon>Pezizomycotina</taxon>
        <taxon>Eurotiomycetes</taxon>
        <taxon>Eurotiomycetidae</taxon>
        <taxon>Eurotiales</taxon>
        <taxon>Aspergillaceae</taxon>
        <taxon>Penicillium</taxon>
    </lineage>
</organism>
<reference key="1">
    <citation type="journal article" date="2014" name="Fungal Genet. Biol.">
        <title>Molecular characterization of the PR-toxin gene cluster in Penicillium roqueforti and Penicillium chrysogenum: cross talk of secondary metabolite pathways.</title>
        <authorList>
            <person name="Hidalgo P.I."/>
            <person name="Ullan R.V."/>
            <person name="Albillos S.M."/>
            <person name="Montero O."/>
            <person name="Fernandez-Bodega M.A."/>
            <person name="Garcia-Estrada C."/>
            <person name="Fernandez-Aguado M."/>
            <person name="Martin J.F."/>
        </authorList>
    </citation>
    <scope>NUCLEOTIDE SEQUENCE [GENOMIC DNA]</scope>
    <scope>FUNCTION</scope>
    <scope>DISRUPTION PHENOTYPE</scope>
    <scope>PATHWAY</scope>
    <source>
        <strain>CECT 2905</strain>
    </source>
</reference>
<reference key="2">
    <citation type="journal article" date="1980" name="Appl. Environ. Microbiol.">
        <title>Production of eremofortins A, B, and C relative to formation of PR toxin by Penicillium roqueforti.</title>
        <authorList>
            <person name="Moreau S."/>
            <person name="Lablache-Combier A."/>
            <person name="Biguet J."/>
        </authorList>
    </citation>
    <scope>FUNCTION</scope>
</reference>
<reference key="3">
    <citation type="journal article" date="1993" name="J. Biol. Chem.">
        <title>Aristolochene synthase. Isolation, characterization, and bacterial expression of a sesquiterpenoid biosynthetic gene (Ari1) from Penicillium roqueforti.</title>
        <authorList>
            <person name="Proctor R.H."/>
            <person name="Hohn T.M."/>
        </authorList>
    </citation>
    <scope>FUNCTION</scope>
</reference>
<reference key="4">
    <citation type="journal article" date="2004" name="J. Am. Chem. Soc.">
        <title>Aristolochene synthase: mechanistic analysis of active site residues by site-directed mutagenesis.</title>
        <authorList>
            <person name="Felicetti B."/>
            <person name="Cane D.E."/>
        </authorList>
    </citation>
    <scope>FUNCTION</scope>
</reference>
<reference key="5">
    <citation type="journal article" date="2015" name="Angew. Chem. Int. Ed.">
        <title>Identification of intermediates in the biosynthesis of PR toxin by Penicillium roqueforti.</title>
        <authorList>
            <person name="Riclea R."/>
            <person name="Dickschat J.S."/>
        </authorList>
    </citation>
    <scope>FUNCTION</scope>
</reference>
<reference key="6">
    <citation type="journal article" date="2017" name="Appl. Microbiol. Biotechnol.">
        <title>Penicillium roqueforti PR toxin gene cluster characterization.</title>
        <authorList>
            <person name="Hidalgo P.I."/>
            <person name="Poirier E."/>
            <person name="Ullan R.V."/>
            <person name="Piqueras J."/>
            <person name="Meslet-Cladiere L."/>
            <person name="Coton E."/>
            <person name="Coton M."/>
        </authorList>
    </citation>
    <scope>FUNCTION</scope>
    <scope>PATHWAY</scope>
</reference>
<comment type="function">
    <text evidence="4 5 6 7 8 9">Short-chain dehydrogenase/reductase; part of the gene cluster that mediates the biosynthesis of PR-toxin, a bicyclic sesquiterpene belonging to the eremophilane class and acting as a mycotoxin (PubMed:24239699, PubMed:27921136). The first step of the pathway is catalyzed by the aristolochene synthase which performs the cyclization of trans,trans-farnesyl diphosphate (FPP) to the bicyclic sesquiterpene aristolochene (PubMed:15186158, PubMed:24239699, PubMed:8440737). Following the formation of aristolochene, the non-oxygenated aristolochene is converted to the trioxygenated intermediate eremofortin B, via 7-epi-neopetasone (PubMed:24239699, PubMed:26274339). This conversion appears to involve three enzymes, a hydroxysterol oxidase-like enzyme, the quinone-oxidase prx3 that forms the quinone-type-structure in the bicyclic nucleus of aristolochene with the C8-oxo group and the C-3 hydroxyl group, and the P450 monooxygenase ORF6 that introduces the epoxide at the double bond between carbons 1 and 2 (PubMed:24239699, PubMed:27921136). No monoxy or dioxy-intermediates have been reported to be released to the broth, so these three early oxidative reactions may be coupled together (PubMed:24239699). Eremofortin B is further oxidized by another P450 monooxygenase, that introduces a second epoxide between carbons 7 and 11 prior to acetylation to eremofortin A by the acetyltransferase ORF8 (PubMed:16345540, PubMed:24239699, PubMed:27921136). The second epoxidation may be performed by a second P450 monooxygenase (PubMed:24239699). After the acetylation step, eremofortin A is converted to eremofortin C and then to PR-toxin (PubMed:24239699). First the conversion of eremofortin A to eremofortin C proceeds by oxidation of the side chain of the molecule at C-12 and is catalyzed by the short-chain oxidoreductase prx1 (PubMed:16345540, PubMed:24239699). The cytochrome P450 monooxygenase ORF6 is probably also involved in this step (PubMed:27921136). The primary alcohol formed at C-12 is finally oxidized by the short-chain alcohol dehydrogenase prx4 that forms PR-toxin (PubMed:16345540, PubMed:24239699).</text>
</comment>
<comment type="pathway">
    <text evidence="6 14">Sesquiterpene biosynthesis.</text>
</comment>
<comment type="disruption phenotype">
    <text evidence="6">Reduces the production of PR-toxin and leads to a large increase in mycophenolic acid production.</text>
</comment>
<comment type="similarity">
    <text evidence="12">Belongs to the short-chain dehydrogenases/reductases (SDR) family.</text>
</comment>
<evidence type="ECO:0000250" key="1">
    <source>
        <dbReference type="UniProtKB" id="L0E2Z4"/>
    </source>
</evidence>
<evidence type="ECO:0000250" key="2">
    <source>
        <dbReference type="UniProtKB" id="O93868"/>
    </source>
</evidence>
<evidence type="ECO:0000255" key="3">
    <source>
        <dbReference type="PROSITE-ProRule" id="PRU10001"/>
    </source>
</evidence>
<evidence type="ECO:0000269" key="4">
    <source>
    </source>
</evidence>
<evidence type="ECO:0000269" key="5">
    <source>
    </source>
</evidence>
<evidence type="ECO:0000269" key="6">
    <source>
    </source>
</evidence>
<evidence type="ECO:0000269" key="7">
    <source>
    </source>
</evidence>
<evidence type="ECO:0000269" key="8">
    <source>
    </source>
</evidence>
<evidence type="ECO:0000269" key="9">
    <source>
    </source>
</evidence>
<evidence type="ECO:0000303" key="10">
    <source>
    </source>
</evidence>
<evidence type="ECO:0000303" key="11">
    <source>
    </source>
</evidence>
<evidence type="ECO:0000305" key="12"/>
<evidence type="ECO:0000305" key="13">
    <source>
    </source>
</evidence>
<evidence type="ECO:0000305" key="14">
    <source>
    </source>
</evidence>
<proteinExistence type="inferred from homology"/>
<gene>
    <name evidence="10" type="primary">prx1</name>
    <name evidence="11" type="synonym">ORF1</name>
</gene>
<dbReference type="EC" id="1.1.99.-" evidence="13"/>
<dbReference type="EMBL" id="KC013361">
    <property type="protein sequence ID" value="AGS83383.1"/>
    <property type="molecule type" value="Genomic_DNA"/>
</dbReference>
<dbReference type="SMR" id="A0A023I4F1"/>
<dbReference type="OMA" id="AKTACIW"/>
<dbReference type="PhylomeDB" id="A0A023I4F1"/>
<dbReference type="GO" id="GO:0016491">
    <property type="term" value="F:oxidoreductase activity"/>
    <property type="evidence" value="ECO:0007669"/>
    <property type="project" value="UniProtKB-KW"/>
</dbReference>
<dbReference type="Gene3D" id="3.40.50.720">
    <property type="entry name" value="NAD(P)-binding Rossmann-like Domain"/>
    <property type="match status" value="1"/>
</dbReference>
<dbReference type="InterPro" id="IPR036291">
    <property type="entry name" value="NAD(P)-bd_dom_sf"/>
</dbReference>
<dbReference type="InterPro" id="IPR002347">
    <property type="entry name" value="SDR_fam"/>
</dbReference>
<dbReference type="PANTHER" id="PTHR24320:SF272">
    <property type="entry name" value="NAD(P)-BINDING ROSSMANN-FOLD SUPERFAMILY PROTEIN"/>
    <property type="match status" value="1"/>
</dbReference>
<dbReference type="PANTHER" id="PTHR24320">
    <property type="entry name" value="RETINOL DEHYDROGENASE"/>
    <property type="match status" value="1"/>
</dbReference>
<dbReference type="Pfam" id="PF00106">
    <property type="entry name" value="adh_short"/>
    <property type="match status" value="1"/>
</dbReference>
<dbReference type="PRINTS" id="PR00081">
    <property type="entry name" value="GDHRDH"/>
</dbReference>
<dbReference type="SUPFAM" id="SSF51735">
    <property type="entry name" value="NAD(P)-binding Rossmann-fold domains"/>
    <property type="match status" value="1"/>
</dbReference>
<keyword id="KW-0521">NADP</keyword>
<keyword id="KW-0560">Oxidoreductase</keyword>
<feature type="chain" id="PRO_0000451213" description="Short-chain dehydrogenase/reductase prx1">
    <location>
        <begin position="1"/>
        <end position="340"/>
    </location>
</feature>
<feature type="active site" description="Proton donor" evidence="2">
    <location>
        <position position="184"/>
    </location>
</feature>
<feature type="active site" description="Proton acceptor" evidence="3">
    <location>
        <position position="210"/>
    </location>
</feature>
<feature type="active site" description="Lowers pKa of active site Tyr" evidence="2">
    <location>
        <position position="214"/>
    </location>
</feature>
<feature type="binding site" evidence="1">
    <location>
        <position position="60"/>
    </location>
    <ligand>
        <name>NADP(+)</name>
        <dbReference type="ChEBI" id="CHEBI:58349"/>
    </ligand>
</feature>
<feature type="binding site" evidence="1">
    <location>
        <position position="84"/>
    </location>
    <ligand>
        <name>NADP(+)</name>
        <dbReference type="ChEBI" id="CHEBI:58349"/>
    </ligand>
</feature>
<feature type="binding site" evidence="1">
    <location>
        <position position="104"/>
    </location>
    <ligand>
        <name>NADP(+)</name>
        <dbReference type="ChEBI" id="CHEBI:58349"/>
    </ligand>
</feature>
<feature type="binding site" evidence="2">
    <location>
        <position position="131"/>
    </location>
    <ligand>
        <name>NADP(+)</name>
        <dbReference type="ChEBI" id="CHEBI:58349"/>
    </ligand>
</feature>
<feature type="binding site" evidence="1">
    <location>
        <position position="162"/>
    </location>
    <ligand>
        <name>NADP(+)</name>
        <dbReference type="ChEBI" id="CHEBI:58349"/>
    </ligand>
</feature>
<feature type="binding site" evidence="2">
    <location>
        <position position="210"/>
    </location>
    <ligand>
        <name>NADP(+)</name>
        <dbReference type="ChEBI" id="CHEBI:58349"/>
    </ligand>
</feature>
<feature type="binding site" evidence="2">
    <location>
        <position position="214"/>
    </location>
    <ligand>
        <name>NADP(+)</name>
        <dbReference type="ChEBI" id="CHEBI:58349"/>
    </ligand>
</feature>
<protein>
    <recommendedName>
        <fullName evidence="10">Short-chain dehydrogenase/reductase prx1</fullName>
        <ecNumber evidence="13">1.1.99.-</ecNumber>
    </recommendedName>
    <alternativeName>
        <fullName evidence="10">PR-toxin biosynthesis cluster protein 1</fullName>
    </alternativeName>
</protein>
<name>PRX1_PENRO</name>
<sequence>MANPLISNHIGKHGKYTQAFLEQNGPGDARPTALDILKDNDRIDNMKDKVFLLTGSSGGIGIETGRALAATGGKVYLGVRDLEKGKQALAEILEPGRVELLELDVGSMESVRTAAKTFLSKSTQLNVLVNNAGIMACPEAKTVDGFESQLAINYLGHFLLYKLLEQTLLSSSTPEFQSRVVNVSSAGHHMSSVVLDNINLEGEYEPWKAYGNAKTACIWMTNEIEHRYGSKGLHGLSLMPGGIATSLQRHVDPETLKEWGSSEFAQKYAKSSAQGAATTITAALGKEWEGKGGVYLEDCQEAGPVPEGGTLAVGVAPHAFDPEGEKKLWDLSLKMLNLSE</sequence>
<accession>A0A023I4F1</accession>